<organism>
    <name type="scientific">Arabidopsis thaliana</name>
    <name type="common">Mouse-ear cress</name>
    <dbReference type="NCBI Taxonomy" id="3702"/>
    <lineage>
        <taxon>Eukaryota</taxon>
        <taxon>Viridiplantae</taxon>
        <taxon>Streptophyta</taxon>
        <taxon>Embryophyta</taxon>
        <taxon>Tracheophyta</taxon>
        <taxon>Spermatophyta</taxon>
        <taxon>Magnoliopsida</taxon>
        <taxon>eudicotyledons</taxon>
        <taxon>Gunneridae</taxon>
        <taxon>Pentapetalae</taxon>
        <taxon>rosids</taxon>
        <taxon>malvids</taxon>
        <taxon>Brassicales</taxon>
        <taxon>Brassicaceae</taxon>
        <taxon>Camelineae</taxon>
        <taxon>Arabidopsis</taxon>
    </lineage>
</organism>
<accession>Q9FJ09</accession>
<reference key="1">
    <citation type="journal article" date="1998" name="DNA Res.">
        <title>Structural analysis of Arabidopsis thaliana chromosome 5. VIII. Sequence features of the regions of 1,081,958 bp covered by seventeen physically assigned P1 and TAC clones.</title>
        <authorList>
            <person name="Asamizu E."/>
            <person name="Sato S."/>
            <person name="Kaneko T."/>
            <person name="Nakamura Y."/>
            <person name="Kotani H."/>
            <person name="Miyajima N."/>
            <person name="Tabata S."/>
        </authorList>
    </citation>
    <scope>NUCLEOTIDE SEQUENCE [LARGE SCALE GENOMIC DNA]</scope>
    <source>
        <strain>cv. Columbia</strain>
    </source>
</reference>
<reference key="2">
    <citation type="journal article" date="2017" name="Plant J.">
        <title>Araport11: a complete reannotation of the Arabidopsis thaliana reference genome.</title>
        <authorList>
            <person name="Cheng C.Y."/>
            <person name="Krishnakumar V."/>
            <person name="Chan A.P."/>
            <person name="Thibaud-Nissen F."/>
            <person name="Schobel S."/>
            <person name="Town C.D."/>
        </authorList>
    </citation>
    <scope>GENOME REANNOTATION</scope>
    <source>
        <strain>cv. Columbia</strain>
    </source>
</reference>
<reference key="3">
    <citation type="journal article" date="2006" name="Plant Biotechnol. J.">
        <title>Simultaneous high-throughput recombinational cloning of open reading frames in closed and open configurations.</title>
        <authorList>
            <person name="Underwood B.A."/>
            <person name="Vanderhaeghen R."/>
            <person name="Whitford R."/>
            <person name="Town C.D."/>
            <person name="Hilson P."/>
        </authorList>
    </citation>
    <scope>NUCLEOTIDE SEQUENCE [LARGE SCALE MRNA]</scope>
    <source>
        <strain>cv. Columbia</strain>
    </source>
</reference>
<reference key="4">
    <citation type="journal article" date="2008" name="Plant Cell">
        <title>IMPa-4, an Arabidopsis importin alpha isoform, is preferentially involved in agrobacterium-mediated plant transformation.</title>
        <authorList>
            <person name="Bhattacharjee S."/>
            <person name="Lee L.Y."/>
            <person name="Oltmanns H."/>
            <person name="Cao H."/>
            <person name="Gupta V."/>
            <person name="Cuperus J."/>
            <person name="Gelvin S.B."/>
        </authorList>
    </citation>
    <scope>GENE FAMILY</scope>
</reference>
<gene>
    <name evidence="5" type="primary">IMPA5</name>
    <name evidence="7" type="ordered locus">At5g49310</name>
    <name evidence="8" type="ORF">K21P3.21</name>
</gene>
<evidence type="ECO:0000250" key="1">
    <source>
        <dbReference type="UniProtKB" id="Q96321"/>
    </source>
</evidence>
<evidence type="ECO:0000255" key="2"/>
<evidence type="ECO:0000255" key="3">
    <source>
        <dbReference type="PIRNR" id="PIRNR005673"/>
    </source>
</evidence>
<evidence type="ECO:0000255" key="4">
    <source>
        <dbReference type="PROSITE-ProRule" id="PRU00561"/>
    </source>
</evidence>
<evidence type="ECO:0000303" key="5">
    <source>
    </source>
</evidence>
<evidence type="ECO:0000305" key="6"/>
<evidence type="ECO:0000312" key="7">
    <source>
        <dbReference type="Araport" id="AT5G49310"/>
    </source>
</evidence>
<evidence type="ECO:0000312" key="8">
    <source>
        <dbReference type="EMBL" id="BAB10349.1"/>
    </source>
</evidence>
<name>IMPA5_ARATH</name>
<keyword id="KW-0539">Nucleus</keyword>
<keyword id="KW-0653">Protein transport</keyword>
<keyword id="KW-1185">Reference proteome</keyword>
<keyword id="KW-0677">Repeat</keyword>
<keyword id="KW-0813">Transport</keyword>
<feature type="chain" id="PRO_0000431571" description="Importin subunit alpha-5">
    <location>
        <begin position="1"/>
        <end position="519"/>
    </location>
</feature>
<feature type="domain" description="IBB" evidence="4">
    <location>
        <begin position="1"/>
        <end position="58"/>
    </location>
</feature>
<feature type="repeat" description="ARM 1" evidence="2">
    <location>
        <begin position="103"/>
        <end position="143"/>
    </location>
</feature>
<feature type="repeat" description="ARM 2" evidence="2">
    <location>
        <begin position="146"/>
        <end position="185"/>
    </location>
</feature>
<feature type="repeat" description="ARM 3" evidence="2">
    <location>
        <begin position="188"/>
        <end position="228"/>
    </location>
</feature>
<feature type="repeat" description="ARM 4" evidence="2">
    <location>
        <begin position="230"/>
        <end position="269"/>
    </location>
</feature>
<feature type="repeat" description="ARM 5" evidence="2">
    <location>
        <begin position="272"/>
        <end position="311"/>
    </location>
</feature>
<feature type="repeat" description="ARM 6" evidence="2">
    <location>
        <begin position="314"/>
        <end position="354"/>
    </location>
</feature>
<feature type="repeat" description="ARM 7" evidence="2">
    <location>
        <begin position="357"/>
        <end position="396"/>
    </location>
</feature>
<feature type="repeat" description="ARM 8" evidence="2">
    <location>
        <begin position="400"/>
        <end position="439"/>
    </location>
</feature>
<sequence length="519" mass="58029">MSLRPSTKTEIRRIRYKVSVDAEEGRRRREDFLVEIRKSKRNENLMKKRRVKVLPPDYKLISNDPFESLLEIANMITGVFSDDPSLQLEYTTRFRVVLSFDRSPPTDNVIKSGVVPRFVEFLKKDDNPKLQFEAAWALTNIASGASEHTKVVIDHGVVPLFVQLLASPDDDVREQAIWGLGNVAGDSIQCRDFVLNSGAFIPLLHQLNNHATLSILRNATWTLSNFFRGKPSPPFDLVKHVLPVLKRLVYSDDEQVLIDACWALSNLSDASNENIQSVIEAGVVPRLVELLQHASPVVLVPALRCIGNIVSGNSQQTHCVINCGVLPVLADLLTQNHMRGIRREACWTISNITAGLEEQIQSVIDANLIPSLVNLAQHAEFDIKKEAIWAISNASVGGSPNQIKYLVEQNCIKALCDILVCPDLRIILVSLGGLEMILIAGEVDKNLRDVNCYSQMIEDAEGLEKIENLQHHGNNEIYEKAVKILQTYGLVEEDGRLVEEEDEGGDGCSHPEFQFDFSR</sequence>
<comment type="function">
    <text evidence="1">Binds to conventional NLS motifs and mediates nuclear protein import across the nuclear envelope.</text>
</comment>
<comment type="subunit">
    <text evidence="1">Forms a complex with importin subunit beta-1.</text>
</comment>
<comment type="subcellular location">
    <subcellularLocation>
        <location evidence="1">Nucleus envelope</location>
    </subcellularLocation>
</comment>
<comment type="similarity">
    <text evidence="6">Belongs to the importin alpha family.</text>
</comment>
<dbReference type="EMBL" id="AB016872">
    <property type="protein sequence ID" value="BAB10349.1"/>
    <property type="molecule type" value="Genomic_DNA"/>
</dbReference>
<dbReference type="EMBL" id="CP002688">
    <property type="protein sequence ID" value="AED95795.1"/>
    <property type="molecule type" value="Genomic_DNA"/>
</dbReference>
<dbReference type="EMBL" id="DQ447054">
    <property type="protein sequence ID" value="ABE66233.1"/>
    <property type="molecule type" value="mRNA"/>
</dbReference>
<dbReference type="SMR" id="Q9FJ09"/>
<dbReference type="FunCoup" id="Q9FJ09">
    <property type="interactions" value="3265"/>
</dbReference>
<dbReference type="STRING" id="3702.Q9FJ09"/>
<dbReference type="PaxDb" id="3702-AT5G49310.1"/>
<dbReference type="EnsemblPlants" id="AT5G49310.1">
    <property type="protein sequence ID" value="AT5G49310.1"/>
    <property type="gene ID" value="AT5G49310"/>
</dbReference>
<dbReference type="GeneID" id="834991"/>
<dbReference type="Gramene" id="AT5G49310.1">
    <property type="protein sequence ID" value="AT5G49310.1"/>
    <property type="gene ID" value="AT5G49310"/>
</dbReference>
<dbReference type="KEGG" id="ath:AT5G49310"/>
<dbReference type="Araport" id="AT5G49310"/>
<dbReference type="TAIR" id="AT5G49310">
    <property type="gene designation" value="IMPA-5"/>
</dbReference>
<dbReference type="eggNOG" id="KOG0166">
    <property type="taxonomic scope" value="Eukaryota"/>
</dbReference>
<dbReference type="HOGENOM" id="CLU_018084_6_0_1"/>
<dbReference type="InParanoid" id="Q9FJ09"/>
<dbReference type="OMA" id="THCVINC"/>
<dbReference type="PhylomeDB" id="Q9FJ09"/>
<dbReference type="PRO" id="PR:Q9FJ09"/>
<dbReference type="Proteomes" id="UP000006548">
    <property type="component" value="Chromosome 5"/>
</dbReference>
<dbReference type="ExpressionAtlas" id="Q9FJ09">
    <property type="expression patterns" value="baseline and differential"/>
</dbReference>
<dbReference type="GO" id="GO:0005737">
    <property type="term" value="C:cytoplasm"/>
    <property type="evidence" value="ECO:0007669"/>
    <property type="project" value="InterPro"/>
</dbReference>
<dbReference type="GO" id="GO:0005635">
    <property type="term" value="C:nuclear envelope"/>
    <property type="evidence" value="ECO:0007669"/>
    <property type="project" value="UniProtKB-SubCell"/>
</dbReference>
<dbReference type="GO" id="GO:0061608">
    <property type="term" value="F:nuclear import signal receptor activity"/>
    <property type="evidence" value="ECO:0007669"/>
    <property type="project" value="InterPro"/>
</dbReference>
<dbReference type="GO" id="GO:0006606">
    <property type="term" value="P:protein import into nucleus"/>
    <property type="evidence" value="ECO:0007669"/>
    <property type="project" value="InterPro"/>
</dbReference>
<dbReference type="FunFam" id="1.20.5.690:FF:000002">
    <property type="entry name" value="Importin subunit alpha"/>
    <property type="match status" value="1"/>
</dbReference>
<dbReference type="FunFam" id="1.25.10.10:FF:000021">
    <property type="entry name" value="Importin subunit alpha"/>
    <property type="match status" value="1"/>
</dbReference>
<dbReference type="Gene3D" id="1.20.5.690">
    <property type="entry name" value="Importin-alpha, importin-beta-binding domain"/>
    <property type="match status" value="1"/>
</dbReference>
<dbReference type="Gene3D" id="1.25.10.10">
    <property type="entry name" value="Leucine-rich Repeat Variant"/>
    <property type="match status" value="1"/>
</dbReference>
<dbReference type="InterPro" id="IPR011989">
    <property type="entry name" value="ARM-like"/>
</dbReference>
<dbReference type="InterPro" id="IPR016024">
    <property type="entry name" value="ARM-type_fold"/>
</dbReference>
<dbReference type="InterPro" id="IPR032413">
    <property type="entry name" value="Arm_3"/>
</dbReference>
<dbReference type="InterPro" id="IPR000225">
    <property type="entry name" value="Armadillo"/>
</dbReference>
<dbReference type="InterPro" id="IPR002652">
    <property type="entry name" value="Importin-a_IBB"/>
</dbReference>
<dbReference type="InterPro" id="IPR036975">
    <property type="entry name" value="Importin-a_IBB_sf"/>
</dbReference>
<dbReference type="InterPro" id="IPR024931">
    <property type="entry name" value="Importin_alpha"/>
</dbReference>
<dbReference type="PANTHER" id="PTHR23316">
    <property type="entry name" value="IMPORTIN ALPHA"/>
    <property type="match status" value="1"/>
</dbReference>
<dbReference type="Pfam" id="PF00514">
    <property type="entry name" value="Arm"/>
    <property type="match status" value="8"/>
</dbReference>
<dbReference type="Pfam" id="PF16186">
    <property type="entry name" value="Arm_3"/>
    <property type="match status" value="1"/>
</dbReference>
<dbReference type="Pfam" id="PF01749">
    <property type="entry name" value="IBB"/>
    <property type="match status" value="1"/>
</dbReference>
<dbReference type="PIRSF" id="PIRSF005673">
    <property type="entry name" value="Importin_alpha"/>
    <property type="match status" value="1"/>
</dbReference>
<dbReference type="SMART" id="SM00185">
    <property type="entry name" value="ARM"/>
    <property type="match status" value="8"/>
</dbReference>
<dbReference type="SUPFAM" id="SSF48371">
    <property type="entry name" value="ARM repeat"/>
    <property type="match status" value="1"/>
</dbReference>
<dbReference type="PROSITE" id="PS50176">
    <property type="entry name" value="ARM_REPEAT"/>
    <property type="match status" value="3"/>
</dbReference>
<dbReference type="PROSITE" id="PS51214">
    <property type="entry name" value="IBB"/>
    <property type="match status" value="1"/>
</dbReference>
<protein>
    <recommendedName>
        <fullName evidence="6">Importin subunit alpha-5</fullName>
        <shortName evidence="5">IMPa-5</shortName>
    </recommendedName>
    <alternativeName>
        <fullName evidence="3">Importin subunit alpha</fullName>
    </alternativeName>
</protein>
<proteinExistence type="evidence at transcript level"/>